<accession>A8GNR5</accession>
<feature type="chain" id="PRO_1000047761" description="Porphobilinogen deaminase">
    <location>
        <begin position="1"/>
        <end position="301"/>
    </location>
</feature>
<feature type="modified residue" description="S-(dipyrrolylmethanemethyl)cysteine" evidence="1">
    <location>
        <position position="242"/>
    </location>
</feature>
<dbReference type="EC" id="2.5.1.61" evidence="1"/>
<dbReference type="EMBL" id="CP000847">
    <property type="protein sequence ID" value="ABV75040.1"/>
    <property type="molecule type" value="Genomic_DNA"/>
</dbReference>
<dbReference type="RefSeq" id="WP_012149671.1">
    <property type="nucleotide sequence ID" value="NC_009881.1"/>
</dbReference>
<dbReference type="SMR" id="A8GNR5"/>
<dbReference type="STRING" id="293614.A1C_03825"/>
<dbReference type="KEGG" id="rak:A1C_03825"/>
<dbReference type="eggNOG" id="COG0181">
    <property type="taxonomic scope" value="Bacteria"/>
</dbReference>
<dbReference type="HOGENOM" id="CLU_019704_0_2_5"/>
<dbReference type="UniPathway" id="UPA00251">
    <property type="reaction ID" value="UER00319"/>
</dbReference>
<dbReference type="Proteomes" id="UP000006830">
    <property type="component" value="Chromosome"/>
</dbReference>
<dbReference type="GO" id="GO:0005737">
    <property type="term" value="C:cytoplasm"/>
    <property type="evidence" value="ECO:0007669"/>
    <property type="project" value="TreeGrafter"/>
</dbReference>
<dbReference type="GO" id="GO:0004418">
    <property type="term" value="F:hydroxymethylbilane synthase activity"/>
    <property type="evidence" value="ECO:0007669"/>
    <property type="project" value="UniProtKB-UniRule"/>
</dbReference>
<dbReference type="GO" id="GO:0006782">
    <property type="term" value="P:protoporphyrinogen IX biosynthetic process"/>
    <property type="evidence" value="ECO:0007669"/>
    <property type="project" value="UniProtKB-UniRule"/>
</dbReference>
<dbReference type="CDD" id="cd13647">
    <property type="entry name" value="PBP2_PBGD_2"/>
    <property type="match status" value="1"/>
</dbReference>
<dbReference type="FunFam" id="3.40.190.10:FF:000004">
    <property type="entry name" value="Porphobilinogen deaminase"/>
    <property type="match status" value="1"/>
</dbReference>
<dbReference type="FunFam" id="3.40.190.10:FF:000005">
    <property type="entry name" value="Porphobilinogen deaminase"/>
    <property type="match status" value="1"/>
</dbReference>
<dbReference type="Gene3D" id="3.40.190.10">
    <property type="entry name" value="Periplasmic binding protein-like II"/>
    <property type="match status" value="2"/>
</dbReference>
<dbReference type="Gene3D" id="3.30.160.40">
    <property type="entry name" value="Porphobilinogen deaminase, C-terminal domain"/>
    <property type="match status" value="1"/>
</dbReference>
<dbReference type="HAMAP" id="MF_00260">
    <property type="entry name" value="Porphobil_deam"/>
    <property type="match status" value="1"/>
</dbReference>
<dbReference type="InterPro" id="IPR000860">
    <property type="entry name" value="HemC"/>
</dbReference>
<dbReference type="InterPro" id="IPR022419">
    <property type="entry name" value="Porphobilin_deaminase_cofac_BS"/>
</dbReference>
<dbReference type="InterPro" id="IPR022417">
    <property type="entry name" value="Porphobilin_deaminase_N"/>
</dbReference>
<dbReference type="InterPro" id="IPR022418">
    <property type="entry name" value="Porphobilinogen_deaminase_C"/>
</dbReference>
<dbReference type="InterPro" id="IPR036803">
    <property type="entry name" value="Porphobilinogen_deaminase_C_sf"/>
</dbReference>
<dbReference type="NCBIfam" id="TIGR00212">
    <property type="entry name" value="hemC"/>
    <property type="match status" value="1"/>
</dbReference>
<dbReference type="PANTHER" id="PTHR11557">
    <property type="entry name" value="PORPHOBILINOGEN DEAMINASE"/>
    <property type="match status" value="1"/>
</dbReference>
<dbReference type="PANTHER" id="PTHR11557:SF0">
    <property type="entry name" value="PORPHOBILINOGEN DEAMINASE"/>
    <property type="match status" value="1"/>
</dbReference>
<dbReference type="Pfam" id="PF01379">
    <property type="entry name" value="Porphobil_deam"/>
    <property type="match status" value="1"/>
</dbReference>
<dbReference type="Pfam" id="PF03900">
    <property type="entry name" value="Porphobil_deamC"/>
    <property type="match status" value="1"/>
</dbReference>
<dbReference type="PIRSF" id="PIRSF001438">
    <property type="entry name" value="4pyrrol_synth_OHMeBilane_synth"/>
    <property type="match status" value="1"/>
</dbReference>
<dbReference type="PRINTS" id="PR00151">
    <property type="entry name" value="PORPHBDMNASE"/>
</dbReference>
<dbReference type="SUPFAM" id="SSF53850">
    <property type="entry name" value="Periplasmic binding protein-like II"/>
    <property type="match status" value="1"/>
</dbReference>
<dbReference type="SUPFAM" id="SSF54782">
    <property type="entry name" value="Porphobilinogen deaminase (hydroxymethylbilane synthase), C-terminal domain"/>
    <property type="match status" value="1"/>
</dbReference>
<dbReference type="PROSITE" id="PS00533">
    <property type="entry name" value="PORPHOBILINOGEN_DEAM"/>
    <property type="match status" value="1"/>
</dbReference>
<organism>
    <name type="scientific">Rickettsia akari (strain Hartford)</name>
    <dbReference type="NCBI Taxonomy" id="293614"/>
    <lineage>
        <taxon>Bacteria</taxon>
        <taxon>Pseudomonadati</taxon>
        <taxon>Pseudomonadota</taxon>
        <taxon>Alphaproteobacteria</taxon>
        <taxon>Rickettsiales</taxon>
        <taxon>Rickettsiaceae</taxon>
        <taxon>Rickettsieae</taxon>
        <taxon>Rickettsia</taxon>
        <taxon>spotted fever group</taxon>
    </lineage>
</organism>
<protein>
    <recommendedName>
        <fullName evidence="1">Porphobilinogen deaminase</fullName>
        <shortName evidence="1">PBG</shortName>
        <ecNumber evidence="1">2.5.1.61</ecNumber>
    </recommendedName>
    <alternativeName>
        <fullName evidence="1">Hydroxymethylbilane synthase</fullName>
        <shortName evidence="1">HMBS</shortName>
    </alternativeName>
    <alternativeName>
        <fullName evidence="1">Pre-uroporphyrinogen synthase</fullName>
    </alternativeName>
</protein>
<name>HEM3_RICAH</name>
<keyword id="KW-0627">Porphyrin biosynthesis</keyword>
<keyword id="KW-0808">Transferase</keyword>
<comment type="function">
    <text evidence="1">Tetrapolymerization of the monopyrrole PBG into the hydroxymethylbilane pre-uroporphyrinogen in several discrete steps.</text>
</comment>
<comment type="catalytic activity">
    <reaction evidence="1">
        <text>4 porphobilinogen + H2O = hydroxymethylbilane + 4 NH4(+)</text>
        <dbReference type="Rhea" id="RHEA:13185"/>
        <dbReference type="ChEBI" id="CHEBI:15377"/>
        <dbReference type="ChEBI" id="CHEBI:28938"/>
        <dbReference type="ChEBI" id="CHEBI:57845"/>
        <dbReference type="ChEBI" id="CHEBI:58126"/>
        <dbReference type="EC" id="2.5.1.61"/>
    </reaction>
</comment>
<comment type="cofactor">
    <cofactor evidence="1">
        <name>dipyrromethane</name>
        <dbReference type="ChEBI" id="CHEBI:60342"/>
    </cofactor>
    <text evidence="1">Binds 1 dipyrromethane group covalently.</text>
</comment>
<comment type="pathway">
    <text evidence="1">Porphyrin-containing compound metabolism; protoporphyrin-IX biosynthesis; coproporphyrinogen-III from 5-aminolevulinate: step 2/4.</text>
</comment>
<comment type="subunit">
    <text evidence="1">Monomer.</text>
</comment>
<comment type="miscellaneous">
    <text evidence="1">The porphobilinogen subunits are added to the dipyrromethane group.</text>
</comment>
<comment type="similarity">
    <text evidence="1">Belongs to the HMBS family.</text>
</comment>
<gene>
    <name evidence="1" type="primary">hemC</name>
    <name type="ordered locus">A1C_03825</name>
</gene>
<sequence>MINSIRIGTRNSPLALIQTNLVIQQIKQFFPDINCAIVPIITSGDLIQNKPLYDIGGKALFLKEIEQALLDKKIDLAVHSLKDVPGRIPEELVISAVLEREDPRDVFVCLNYKSIKELPQHSVIGSSAVRRKAFIQKIRPDLKVTIFRGNVDSRIKKLMTGEVDATILAYAGLKRLGAFNPEYCHLIEYSHMLPCVGQGVIAVEIRQNDNSMLEICNQINHLPTCELIKPERAFLEYLDANCRTPIGTYSQYLDADNIQTDFMLGNPDCSKITFHTEITNIKTSKEGGIKAAKMMLNQLKK</sequence>
<reference key="1">
    <citation type="submission" date="2007-09" db="EMBL/GenBank/DDBJ databases">
        <title>Complete genome sequence of Rickettsia akari.</title>
        <authorList>
            <person name="Madan A."/>
            <person name="Fahey J."/>
            <person name="Helton E."/>
            <person name="Ketteman M."/>
            <person name="Madan A."/>
            <person name="Rodrigues S."/>
            <person name="Sanchez A."/>
            <person name="Whiting M."/>
            <person name="Dasch G."/>
            <person name="Eremeeva M."/>
        </authorList>
    </citation>
    <scope>NUCLEOTIDE SEQUENCE [LARGE SCALE GENOMIC DNA]</scope>
    <source>
        <strain>Hartford</strain>
    </source>
</reference>
<evidence type="ECO:0000255" key="1">
    <source>
        <dbReference type="HAMAP-Rule" id="MF_00260"/>
    </source>
</evidence>
<proteinExistence type="inferred from homology"/>